<accession>Q5FFT0</accession>
<feature type="chain" id="PRO_0000228348" description="4-hydroxy-tetrahydrodipicolinate reductase">
    <location>
        <begin position="1"/>
        <end position="264"/>
    </location>
</feature>
<feature type="active site" description="Proton donor/acceptor" evidence="1">
    <location>
        <position position="153"/>
    </location>
</feature>
<feature type="active site" description="Proton donor" evidence="1">
    <location>
        <position position="157"/>
    </location>
</feature>
<feature type="binding site" evidence="1">
    <location>
        <begin position="10"/>
        <end position="15"/>
    </location>
    <ligand>
        <name>NAD(+)</name>
        <dbReference type="ChEBI" id="CHEBI:57540"/>
    </ligand>
</feature>
<feature type="binding site" evidence="1">
    <location>
        <position position="37"/>
    </location>
    <ligand>
        <name>NADP(+)</name>
        <dbReference type="ChEBI" id="CHEBI:58349"/>
    </ligand>
</feature>
<feature type="binding site" evidence="1">
    <location>
        <begin position="99"/>
        <end position="101"/>
    </location>
    <ligand>
        <name>NAD(+)</name>
        <dbReference type="ChEBI" id="CHEBI:57540"/>
    </ligand>
</feature>
<feature type="binding site" evidence="1">
    <location>
        <begin position="121"/>
        <end position="124"/>
    </location>
    <ligand>
        <name>NAD(+)</name>
        <dbReference type="ChEBI" id="CHEBI:57540"/>
    </ligand>
</feature>
<feature type="binding site" evidence="1">
    <location>
        <position position="154"/>
    </location>
    <ligand>
        <name>(S)-2,3,4,5-tetrahydrodipicolinate</name>
        <dbReference type="ChEBI" id="CHEBI:16845"/>
    </ligand>
</feature>
<feature type="binding site" evidence="1">
    <location>
        <begin position="163"/>
        <end position="164"/>
    </location>
    <ligand>
        <name>(S)-2,3,4,5-tetrahydrodipicolinate</name>
        <dbReference type="ChEBI" id="CHEBI:16845"/>
    </ligand>
</feature>
<evidence type="ECO:0000255" key="1">
    <source>
        <dbReference type="HAMAP-Rule" id="MF_00102"/>
    </source>
</evidence>
<evidence type="ECO:0000305" key="2"/>
<name>DAPB_EHRRG</name>
<sequence length="264" mass="28972">MNKVKVGIVGCLGRQGRHLVSEISASDIAEVSAGLVRIGSEYVGKVLGVVIGCNCDAKITDSLEHLFDVSDVVIEFTNPNTMIECMKMAELKKKPMVSGTTGISEDMVFQDYIKSVPFLWSANLSFSMNILLKLVEDATRMLSGYDVEIWEIHHRYKKDSPSGTSLMLGKAAARGMNVQFRMNQYIKGGQESRQDNKSIGYAVSRGGVGLSDHKIIFAGDEDVIEFSHRATNKNVYAKGALKAALWLIGQPCGIYTMSDMMVTQ</sequence>
<comment type="function">
    <text evidence="1">Catalyzes the conversion of 4-hydroxy-tetrahydrodipicolinate (HTPA) to tetrahydrodipicolinate.</text>
</comment>
<comment type="catalytic activity">
    <reaction evidence="1">
        <text>(S)-2,3,4,5-tetrahydrodipicolinate + NAD(+) + H2O = (2S,4S)-4-hydroxy-2,3,4,5-tetrahydrodipicolinate + NADH + H(+)</text>
        <dbReference type="Rhea" id="RHEA:35323"/>
        <dbReference type="ChEBI" id="CHEBI:15377"/>
        <dbReference type="ChEBI" id="CHEBI:15378"/>
        <dbReference type="ChEBI" id="CHEBI:16845"/>
        <dbReference type="ChEBI" id="CHEBI:57540"/>
        <dbReference type="ChEBI" id="CHEBI:57945"/>
        <dbReference type="ChEBI" id="CHEBI:67139"/>
        <dbReference type="EC" id="1.17.1.8"/>
    </reaction>
</comment>
<comment type="catalytic activity">
    <reaction evidence="1">
        <text>(S)-2,3,4,5-tetrahydrodipicolinate + NADP(+) + H2O = (2S,4S)-4-hydroxy-2,3,4,5-tetrahydrodipicolinate + NADPH + H(+)</text>
        <dbReference type="Rhea" id="RHEA:35331"/>
        <dbReference type="ChEBI" id="CHEBI:15377"/>
        <dbReference type="ChEBI" id="CHEBI:15378"/>
        <dbReference type="ChEBI" id="CHEBI:16845"/>
        <dbReference type="ChEBI" id="CHEBI:57783"/>
        <dbReference type="ChEBI" id="CHEBI:58349"/>
        <dbReference type="ChEBI" id="CHEBI:67139"/>
        <dbReference type="EC" id="1.17.1.8"/>
    </reaction>
</comment>
<comment type="pathway">
    <text evidence="1">Amino-acid biosynthesis; L-lysine biosynthesis via DAP pathway; (S)-tetrahydrodipicolinate from L-aspartate: step 4/4.</text>
</comment>
<comment type="subcellular location">
    <subcellularLocation>
        <location evidence="1">Cytoplasm</location>
    </subcellularLocation>
</comment>
<comment type="similarity">
    <text evidence="1">Belongs to the DapB family.</text>
</comment>
<comment type="caution">
    <text evidence="2">Was originally thought to be a dihydrodipicolinate reductase (DHDPR), catalyzing the conversion of dihydrodipicolinate to tetrahydrodipicolinate. However, it was shown in E.coli that the substrate of the enzymatic reaction is not dihydrodipicolinate (DHDP) but in fact (2S,4S)-4-hydroxy-2,3,4,5-tetrahydrodipicolinic acid (HTPA), the product released by the DapA-catalyzed reaction.</text>
</comment>
<keyword id="KW-0028">Amino-acid biosynthesis</keyword>
<keyword id="KW-0963">Cytoplasm</keyword>
<keyword id="KW-0220">Diaminopimelate biosynthesis</keyword>
<keyword id="KW-0457">Lysine biosynthesis</keyword>
<keyword id="KW-0520">NAD</keyword>
<keyword id="KW-0521">NADP</keyword>
<keyword id="KW-0560">Oxidoreductase</keyword>
<protein>
    <recommendedName>
        <fullName evidence="1">4-hydroxy-tetrahydrodipicolinate reductase</fullName>
        <shortName evidence="1">HTPA reductase</shortName>
        <ecNumber evidence="1">1.17.1.8</ecNumber>
    </recommendedName>
</protein>
<proteinExistence type="inferred from homology"/>
<gene>
    <name evidence="1" type="primary">dapB</name>
    <name type="ordered locus">ERGA_CDS_05970</name>
</gene>
<reference key="1">
    <citation type="journal article" date="2006" name="J. Bacteriol.">
        <title>Comparative genomic analysis of three strains of Ehrlichia ruminantium reveals an active process of genome size plasticity.</title>
        <authorList>
            <person name="Frutos R."/>
            <person name="Viari A."/>
            <person name="Ferraz C."/>
            <person name="Morgat A."/>
            <person name="Eychenie S."/>
            <person name="Kandassamy Y."/>
            <person name="Chantal I."/>
            <person name="Bensaid A."/>
            <person name="Coissac E."/>
            <person name="Vachiery N."/>
            <person name="Demaille J."/>
            <person name="Martinez D."/>
        </authorList>
    </citation>
    <scope>NUCLEOTIDE SEQUENCE [LARGE SCALE GENOMIC DNA]</scope>
    <source>
        <strain>Gardel</strain>
    </source>
</reference>
<dbReference type="EC" id="1.17.1.8" evidence="1"/>
<dbReference type="EMBL" id="CR925677">
    <property type="protein sequence ID" value="CAI28049.1"/>
    <property type="molecule type" value="Genomic_DNA"/>
</dbReference>
<dbReference type="RefSeq" id="WP_011155257.1">
    <property type="nucleotide sequence ID" value="NC_006831.1"/>
</dbReference>
<dbReference type="SMR" id="Q5FFT0"/>
<dbReference type="GeneID" id="33058422"/>
<dbReference type="KEGG" id="erg:ERGA_CDS_05970"/>
<dbReference type="HOGENOM" id="CLU_047479_2_1_5"/>
<dbReference type="OrthoDB" id="9790352at2"/>
<dbReference type="UniPathway" id="UPA00034">
    <property type="reaction ID" value="UER00018"/>
</dbReference>
<dbReference type="Proteomes" id="UP000000533">
    <property type="component" value="Chromosome"/>
</dbReference>
<dbReference type="GO" id="GO:0005737">
    <property type="term" value="C:cytoplasm"/>
    <property type="evidence" value="ECO:0007669"/>
    <property type="project" value="UniProtKB-SubCell"/>
</dbReference>
<dbReference type="GO" id="GO:0008839">
    <property type="term" value="F:4-hydroxy-tetrahydrodipicolinate reductase"/>
    <property type="evidence" value="ECO:0007669"/>
    <property type="project" value="UniProtKB-EC"/>
</dbReference>
<dbReference type="GO" id="GO:0051287">
    <property type="term" value="F:NAD binding"/>
    <property type="evidence" value="ECO:0007669"/>
    <property type="project" value="UniProtKB-UniRule"/>
</dbReference>
<dbReference type="GO" id="GO:0050661">
    <property type="term" value="F:NADP binding"/>
    <property type="evidence" value="ECO:0007669"/>
    <property type="project" value="UniProtKB-UniRule"/>
</dbReference>
<dbReference type="GO" id="GO:0016726">
    <property type="term" value="F:oxidoreductase activity, acting on CH or CH2 groups, NAD or NADP as acceptor"/>
    <property type="evidence" value="ECO:0007669"/>
    <property type="project" value="UniProtKB-UniRule"/>
</dbReference>
<dbReference type="GO" id="GO:0019877">
    <property type="term" value="P:diaminopimelate biosynthetic process"/>
    <property type="evidence" value="ECO:0007669"/>
    <property type="project" value="UniProtKB-UniRule"/>
</dbReference>
<dbReference type="GO" id="GO:0009089">
    <property type="term" value="P:lysine biosynthetic process via diaminopimelate"/>
    <property type="evidence" value="ECO:0007669"/>
    <property type="project" value="UniProtKB-UniRule"/>
</dbReference>
<dbReference type="CDD" id="cd02274">
    <property type="entry name" value="DHDPR_N"/>
    <property type="match status" value="1"/>
</dbReference>
<dbReference type="Gene3D" id="3.30.360.10">
    <property type="entry name" value="Dihydrodipicolinate Reductase, domain 2"/>
    <property type="match status" value="1"/>
</dbReference>
<dbReference type="Gene3D" id="3.40.50.720">
    <property type="entry name" value="NAD(P)-binding Rossmann-like Domain"/>
    <property type="match status" value="1"/>
</dbReference>
<dbReference type="HAMAP" id="MF_00102">
    <property type="entry name" value="DapB"/>
    <property type="match status" value="1"/>
</dbReference>
<dbReference type="InterPro" id="IPR022663">
    <property type="entry name" value="DapB_C"/>
</dbReference>
<dbReference type="InterPro" id="IPR000846">
    <property type="entry name" value="DapB_N"/>
</dbReference>
<dbReference type="InterPro" id="IPR022664">
    <property type="entry name" value="DapB_N_CS"/>
</dbReference>
<dbReference type="InterPro" id="IPR023940">
    <property type="entry name" value="DHDPR_bac"/>
</dbReference>
<dbReference type="InterPro" id="IPR036291">
    <property type="entry name" value="NAD(P)-bd_dom_sf"/>
</dbReference>
<dbReference type="NCBIfam" id="TIGR00036">
    <property type="entry name" value="dapB"/>
    <property type="match status" value="1"/>
</dbReference>
<dbReference type="PANTHER" id="PTHR20836:SF0">
    <property type="entry name" value="4-HYDROXY-TETRAHYDRODIPICOLINATE REDUCTASE 1, CHLOROPLASTIC-RELATED"/>
    <property type="match status" value="1"/>
</dbReference>
<dbReference type="PANTHER" id="PTHR20836">
    <property type="entry name" value="DIHYDRODIPICOLINATE REDUCTASE"/>
    <property type="match status" value="1"/>
</dbReference>
<dbReference type="Pfam" id="PF05173">
    <property type="entry name" value="DapB_C"/>
    <property type="match status" value="1"/>
</dbReference>
<dbReference type="Pfam" id="PF01113">
    <property type="entry name" value="DapB_N"/>
    <property type="match status" value="1"/>
</dbReference>
<dbReference type="PIRSF" id="PIRSF000161">
    <property type="entry name" value="DHPR"/>
    <property type="match status" value="1"/>
</dbReference>
<dbReference type="SUPFAM" id="SSF55347">
    <property type="entry name" value="Glyceraldehyde-3-phosphate dehydrogenase-like, C-terminal domain"/>
    <property type="match status" value="1"/>
</dbReference>
<dbReference type="SUPFAM" id="SSF51735">
    <property type="entry name" value="NAD(P)-binding Rossmann-fold domains"/>
    <property type="match status" value="1"/>
</dbReference>
<dbReference type="PROSITE" id="PS01298">
    <property type="entry name" value="DAPB"/>
    <property type="match status" value="1"/>
</dbReference>
<organism>
    <name type="scientific">Ehrlichia ruminantium (strain Gardel)</name>
    <dbReference type="NCBI Taxonomy" id="302409"/>
    <lineage>
        <taxon>Bacteria</taxon>
        <taxon>Pseudomonadati</taxon>
        <taxon>Pseudomonadota</taxon>
        <taxon>Alphaproteobacteria</taxon>
        <taxon>Rickettsiales</taxon>
        <taxon>Anaplasmataceae</taxon>
        <taxon>Ehrlichia</taxon>
    </lineage>
</organism>